<comment type="function">
    <text evidence="1">Protects DNA from oxidative damage by sequestering intracellular Fe(2+) ion and storing it in the form of Fe(3+) oxyhydroxide mineral. One hydrogen peroxide oxidizes two Fe(2+) ions, which prevents hydroxyl radical production by the Fenton reaction (By similarity). It efficiently oxidizes Fe(2+) in the presence of hydrogen peroxide and stores it.</text>
</comment>
<comment type="catalytic activity">
    <reaction>
        <text>2 Fe(2+) + H2O2 + 2 H(+) = 2 Fe(3+) + 2 H2O</text>
        <dbReference type="Rhea" id="RHEA:48712"/>
        <dbReference type="ChEBI" id="CHEBI:15377"/>
        <dbReference type="ChEBI" id="CHEBI:15378"/>
        <dbReference type="ChEBI" id="CHEBI:16240"/>
        <dbReference type="ChEBI" id="CHEBI:29033"/>
        <dbReference type="ChEBI" id="CHEBI:29034"/>
    </reaction>
</comment>
<comment type="subunit">
    <text evidence="3">Homododecamer. The 12 identical subunits form a holow sphere unto which the mineral iron core of up to 300 Fe(3+) can be deposited.</text>
</comment>
<comment type="subcellular location">
    <subcellularLocation>
        <location evidence="1">Cytoplasm</location>
        <location evidence="1">Nucleoid</location>
    </subcellularLocation>
</comment>
<comment type="similarity">
    <text evidence="4">Belongs to the Dps family.</text>
</comment>
<evidence type="ECO:0000250" key="1"/>
<evidence type="ECO:0000255" key="2"/>
<evidence type="ECO:0000269" key="3">
    <source>
    </source>
</evidence>
<evidence type="ECO:0000305" key="4"/>
<evidence type="ECO:0007829" key="5">
    <source>
        <dbReference type="PDB" id="7STW"/>
    </source>
</evidence>
<keyword id="KW-0002">3D-structure</keyword>
<keyword id="KW-0963">Cytoplasm</keyword>
<keyword id="KW-0238">DNA-binding</keyword>
<keyword id="KW-0408">Iron</keyword>
<keyword id="KW-0409">Iron storage</keyword>
<keyword id="KW-0479">Metal-binding</keyword>
<keyword id="KW-0560">Oxidoreductase</keyword>
<keyword id="KW-1185">Reference proteome</keyword>
<name>DPS_PYRFU</name>
<protein>
    <recommendedName>
        <fullName>DNA protection during starvation protein</fullName>
        <ecNumber>1.16.-.-</ecNumber>
    </recommendedName>
</protein>
<proteinExistence type="evidence at protein level"/>
<gene>
    <name type="primary">dps</name>
    <name type="ordered locus">PF1193</name>
</gene>
<dbReference type="EC" id="1.16.-.-"/>
<dbReference type="EMBL" id="AE009950">
    <property type="protein sequence ID" value="AAL81317.1"/>
    <property type="molecule type" value="Genomic_DNA"/>
</dbReference>
<dbReference type="RefSeq" id="WP_011012334.1">
    <property type="nucleotide sequence ID" value="NZ_CP023154.1"/>
</dbReference>
<dbReference type="PDB" id="7STW">
    <property type="method" value="EM"/>
    <property type="resolution" value="2.37 A"/>
    <property type="chains" value="A/B/C/D/E/F/G/H/I/J/K/L=1-185"/>
</dbReference>
<dbReference type="PDBsum" id="7STW"/>
<dbReference type="EMDB" id="EMD-25437"/>
<dbReference type="SMR" id="Q8U1L3"/>
<dbReference type="STRING" id="186497.PF1193"/>
<dbReference type="PaxDb" id="186497-PF1193"/>
<dbReference type="GeneID" id="41713001"/>
<dbReference type="KEGG" id="pfu:PF1193"/>
<dbReference type="PATRIC" id="fig|186497.12.peg.1254"/>
<dbReference type="eggNOG" id="arCOG01093">
    <property type="taxonomic scope" value="Archaea"/>
</dbReference>
<dbReference type="HOGENOM" id="CLU_104506_4_0_2"/>
<dbReference type="OrthoDB" id="5651at2157"/>
<dbReference type="PhylomeDB" id="Q8U1L3"/>
<dbReference type="Proteomes" id="UP000001013">
    <property type="component" value="Chromosome"/>
</dbReference>
<dbReference type="GO" id="GO:0005829">
    <property type="term" value="C:cytosol"/>
    <property type="evidence" value="ECO:0007669"/>
    <property type="project" value="TreeGrafter"/>
</dbReference>
<dbReference type="GO" id="GO:0009295">
    <property type="term" value="C:nucleoid"/>
    <property type="evidence" value="ECO:0007669"/>
    <property type="project" value="UniProtKB-SubCell"/>
</dbReference>
<dbReference type="GO" id="GO:0003677">
    <property type="term" value="F:DNA binding"/>
    <property type="evidence" value="ECO:0007669"/>
    <property type="project" value="UniProtKB-KW"/>
</dbReference>
<dbReference type="GO" id="GO:0008199">
    <property type="term" value="F:ferric iron binding"/>
    <property type="evidence" value="ECO:0007669"/>
    <property type="project" value="InterPro"/>
</dbReference>
<dbReference type="GO" id="GO:0004322">
    <property type="term" value="F:ferroxidase activity"/>
    <property type="evidence" value="ECO:0007669"/>
    <property type="project" value="TreeGrafter"/>
</dbReference>
<dbReference type="GO" id="GO:0020037">
    <property type="term" value="F:heme binding"/>
    <property type="evidence" value="ECO:0007669"/>
    <property type="project" value="TreeGrafter"/>
</dbReference>
<dbReference type="GO" id="GO:0006879">
    <property type="term" value="P:intracellular iron ion homeostasis"/>
    <property type="evidence" value="ECO:0007669"/>
    <property type="project" value="UniProtKB-KW"/>
</dbReference>
<dbReference type="CDD" id="cd01052">
    <property type="entry name" value="DPSL"/>
    <property type="match status" value="1"/>
</dbReference>
<dbReference type="Gene3D" id="1.20.1260.10">
    <property type="match status" value="1"/>
</dbReference>
<dbReference type="InterPro" id="IPR053475">
    <property type="entry name" value="DPS"/>
</dbReference>
<dbReference type="InterPro" id="IPR014490">
    <property type="entry name" value="Dps-like"/>
</dbReference>
<dbReference type="InterPro" id="IPR033921">
    <property type="entry name" value="DPSL_diiron-bd_dom"/>
</dbReference>
<dbReference type="InterPro" id="IPR012347">
    <property type="entry name" value="Ferritin-like"/>
</dbReference>
<dbReference type="InterPro" id="IPR009078">
    <property type="entry name" value="Ferritin-like_SF"/>
</dbReference>
<dbReference type="InterPro" id="IPR008331">
    <property type="entry name" value="Ferritin_DPS_dom"/>
</dbReference>
<dbReference type="NCBIfam" id="NF040955">
    <property type="entry name" value="Arch_DPS"/>
    <property type="match status" value="1"/>
</dbReference>
<dbReference type="NCBIfam" id="NF009990">
    <property type="entry name" value="PRK13456.1"/>
    <property type="match status" value="1"/>
</dbReference>
<dbReference type="PANTHER" id="PTHR30295">
    <property type="entry name" value="BACTERIOFERRITIN"/>
    <property type="match status" value="1"/>
</dbReference>
<dbReference type="PANTHER" id="PTHR30295:SF1">
    <property type="entry name" value="DNA PROTECTION DURING STARVATION PROTEIN"/>
    <property type="match status" value="1"/>
</dbReference>
<dbReference type="Pfam" id="PF00210">
    <property type="entry name" value="Ferritin"/>
    <property type="match status" value="1"/>
</dbReference>
<dbReference type="PIRSF" id="PIRSF018063">
    <property type="entry name" value="Ferrtn_UCP018063"/>
    <property type="match status" value="1"/>
</dbReference>
<dbReference type="SUPFAM" id="SSF47240">
    <property type="entry name" value="Ferritin-like"/>
    <property type="match status" value="1"/>
</dbReference>
<organism>
    <name type="scientific">Pyrococcus furiosus (strain ATCC 43587 / DSM 3638 / JCM 8422 / Vc1)</name>
    <dbReference type="NCBI Taxonomy" id="186497"/>
    <lineage>
        <taxon>Archaea</taxon>
        <taxon>Methanobacteriati</taxon>
        <taxon>Methanobacteriota</taxon>
        <taxon>Thermococci</taxon>
        <taxon>Thermococcales</taxon>
        <taxon>Thermococcaceae</taxon>
        <taxon>Pyrococcus</taxon>
    </lineage>
</organism>
<feature type="chain" id="PRO_0000253335" description="DNA protection during starvation protein">
    <location>
        <begin position="1"/>
        <end position="185"/>
    </location>
</feature>
<feature type="binding site" evidence="2">
    <location>
        <position position="30"/>
    </location>
    <ligand>
        <name>Fe cation</name>
        <dbReference type="ChEBI" id="CHEBI:24875"/>
    </ligand>
</feature>
<feature type="binding site" evidence="2">
    <location>
        <position position="66"/>
    </location>
    <ligand>
        <name>Fe cation</name>
        <dbReference type="ChEBI" id="CHEBI:24875"/>
    </ligand>
</feature>
<feature type="binding site" evidence="2">
    <location>
        <position position="116"/>
    </location>
    <ligand>
        <name>Fe cation</name>
        <dbReference type="ChEBI" id="CHEBI:24875"/>
    </ligand>
</feature>
<feature type="binding site" evidence="2">
    <location>
        <position position="148"/>
    </location>
    <ligand>
        <name>Fe cation</name>
        <dbReference type="ChEBI" id="CHEBI:24875"/>
    </ligand>
</feature>
<feature type="binding site" evidence="2">
    <location>
        <position position="151"/>
    </location>
    <ligand>
        <name>Fe cation</name>
        <dbReference type="ChEBI" id="CHEBI:24875"/>
    </ligand>
</feature>
<feature type="helix" evidence="5">
    <location>
        <begin position="16"/>
        <end position="42"/>
    </location>
</feature>
<feature type="helix" evidence="5">
    <location>
        <begin position="46"/>
        <end position="76"/>
    </location>
</feature>
<feature type="helix" evidence="5">
    <location>
        <begin position="85"/>
        <end position="89"/>
    </location>
</feature>
<feature type="helix" evidence="5">
    <location>
        <begin position="105"/>
        <end position="130"/>
    </location>
</feature>
<feature type="turn" evidence="5">
    <location>
        <begin position="131"/>
        <end position="133"/>
    </location>
</feature>
<feature type="helix" evidence="5">
    <location>
        <begin position="135"/>
        <end position="159"/>
    </location>
</feature>
<feature type="turn" evidence="5">
    <location>
        <begin position="176"/>
        <end position="178"/>
    </location>
</feature>
<feature type="helix" evidence="5">
    <location>
        <begin position="179"/>
        <end position="181"/>
    </location>
</feature>
<accession>Q8U1L3</accession>
<reference key="1">
    <citation type="journal article" date="1999" name="Genetics">
        <title>Divergence of the hyperthermophilic archaea Pyrococcus furiosus and P. horikoshii inferred from complete genomic sequences.</title>
        <authorList>
            <person name="Maeder D.L."/>
            <person name="Weiss R.B."/>
            <person name="Dunn D.M."/>
            <person name="Cherry J.L."/>
            <person name="Gonzalez J.M."/>
            <person name="DiRuggiero J."/>
            <person name="Robb F.T."/>
        </authorList>
    </citation>
    <scope>NUCLEOTIDE SEQUENCE [LARGE SCALE GENOMIC DNA]</scope>
    <source>
        <strain>ATCC 43587 / DSM 3638 / JCM 8422 / Vc1</strain>
    </source>
</reference>
<reference key="2">
    <citation type="journal article" date="2006" name="J. Inorg. Biochem.">
        <title>Dps-like protein from the hyperthermophilic archaeon Pyrococcus furiosus.</title>
        <authorList>
            <person name="Ramsay B."/>
            <person name="Wiedenheft B."/>
            <person name="Allen M."/>
            <person name="Gauss G.H."/>
            <person name="Martin Lawrence C."/>
            <person name="Young M."/>
            <person name="Douglas T."/>
        </authorList>
    </citation>
    <scope>IRON OXIDATION</scope>
    <scope>SUBUNIT</scope>
</reference>
<sequence>MPEHNRRLVERTGIDVEKLLELLIKAAAAEFTTYYYYTILRNHATGLEGEAIKEIIEDARLEDRNHFEALVPRIYELGGELPRDIREFADLASCRDAYLPEEPTIENILKVLLEAERCAVGVYTEICNYTFGKDPRTYDLALAILHEEIEHEAWFEELLTGKPSGHFRRGKPGESPYVSKFLKTR</sequence>